<sequence length="708" mass="78925">MSLPAISLYTSPPPGAVYSSEFDPSSRGSSPPCSTAPPSTSHRPPAAAGGLSCLFSSPAAAASPPRAPPHDELGALWQDRSDEPAFAGGGGGYSSSPLKWRDLHHHHHHSPVSVFQGPSSSPAASRSPPASWLAGRDRDRERLFAGFVRNALGSCVDYAPALSPRSEVGGGELAFELDENLAEASPACEPCARELLAGAQARHRIFHEELVVKTFFEAEKAHRGQTRASGDPYLQHCVETAVLLANIGANSTVVSAGLLHDTIDDSFIDYDHIFHMFGAGVADLVEGVSKLSHLSKLARDNNTASRIVEADRLHTMLLAMADARAVLIKLADRVHNMKTLEALPLGKQQRFAKETMEIFVPLANRLGIASWKDQLENLCFKHLNPEEHKDLSSKLTKSFDEVLITSAVDKLDRGLRDAGLSYHNLSGRHKSLYSIHNKMLKKNLTMDEIHDIHGLRLVFEKEEDCYRALDVVHELWPQVPGRFKDYISRPKLNGYRSLHTVVMSENVHPFEVQIRTKEMHLQAEYGFAAHWRYKEGTCRHSFVLQMVEWARWVLTWQCEAMNKERPASLGDSDAIRPPCPFPMHSEDCPYSYTRQCDHDGPIFVILLEHDKMSVQEFQANSTVMNLMDRVGTNTPRWSPYRIPMKEDLRPKVNHEPISDLNRKLSMGDVVELTPALPHESLPNYREEIQRMYDRGGFALATRGGSSRR</sequence>
<keyword id="KW-0067">ATP-binding</keyword>
<keyword id="KW-0150">Chloroplast</keyword>
<keyword id="KW-0342">GTP-binding</keyword>
<keyword id="KW-0418">Kinase</keyword>
<keyword id="KW-0547">Nucleotide-binding</keyword>
<keyword id="KW-0934">Plastid</keyword>
<keyword id="KW-1185">Reference proteome</keyword>
<keyword id="KW-0346">Stress response</keyword>
<keyword id="KW-0808">Transferase</keyword>
<keyword id="KW-0809">Transit peptide</keyword>
<organism>
    <name type="scientific">Oryza sativa subsp. japonica</name>
    <name type="common">Rice</name>
    <dbReference type="NCBI Taxonomy" id="39947"/>
    <lineage>
        <taxon>Eukaryota</taxon>
        <taxon>Viridiplantae</taxon>
        <taxon>Streptophyta</taxon>
        <taxon>Embryophyta</taxon>
        <taxon>Tracheophyta</taxon>
        <taxon>Spermatophyta</taxon>
        <taxon>Magnoliopsida</taxon>
        <taxon>Liliopsida</taxon>
        <taxon>Poales</taxon>
        <taxon>Poaceae</taxon>
        <taxon>BOP clade</taxon>
        <taxon>Oryzoideae</taxon>
        <taxon>Oryzeae</taxon>
        <taxon>Oryzinae</taxon>
        <taxon>Oryza</taxon>
        <taxon>Oryza sativa</taxon>
    </lineage>
</organism>
<comment type="function">
    <text evidence="1">Probable ppGpp (guanosine 3'-diphosphate 5'-diphosphate) synthetase that may be involved in a rapid plant ppGpp-mediated response to pathogens and other stresses.</text>
</comment>
<comment type="catalytic activity">
    <reaction>
        <text>GTP + ATP = guanosine 3'-diphosphate 5'-triphosphate + AMP</text>
        <dbReference type="Rhea" id="RHEA:22088"/>
        <dbReference type="ChEBI" id="CHEBI:30616"/>
        <dbReference type="ChEBI" id="CHEBI:37565"/>
        <dbReference type="ChEBI" id="CHEBI:142410"/>
        <dbReference type="ChEBI" id="CHEBI:456215"/>
        <dbReference type="EC" id="2.7.6.5"/>
    </reaction>
</comment>
<comment type="subcellular location">
    <subcellularLocation>
        <location evidence="6">Plastid</location>
        <location evidence="6">Chloroplast</location>
    </subcellularLocation>
</comment>
<comment type="induction">
    <text evidence="5">By jasmonic acid (JA) and infection with the fungal pathogen Magnaporthe grisea.</text>
</comment>
<comment type="similarity">
    <text evidence="6">Belongs to the RelA/SpoT family.</text>
</comment>
<comment type="sequence caution" evidence="6">
    <conflict type="miscellaneous discrepancy">
        <sequence resource="EMBL-CDS" id="BAC81141"/>
    </conflict>
    <text>Intron retention.</text>
</comment>
<comment type="sequence caution" evidence="6">
    <conflict type="erroneous gene model prediction">
        <sequence resource="EMBL-CDS" id="BAF25205"/>
    </conflict>
</comment>
<name>RSH3_ORYSJ</name>
<dbReference type="EC" id="2.7.6.5"/>
<dbReference type="EMBL" id="AB095097">
    <property type="protein sequence ID" value="BAC81141.1"/>
    <property type="status" value="ALT_SEQ"/>
    <property type="molecule type" value="mRNA"/>
</dbReference>
<dbReference type="EMBL" id="AP005419">
    <property type="protein sequence ID" value="BAD38079.1"/>
    <property type="molecule type" value="Genomic_DNA"/>
</dbReference>
<dbReference type="EMBL" id="AP008215">
    <property type="protein sequence ID" value="BAF25205.1"/>
    <property type="status" value="ALT_SEQ"/>
    <property type="molecule type" value="Genomic_DNA"/>
</dbReference>
<dbReference type="EMBL" id="AP014965">
    <property type="status" value="NOT_ANNOTATED_CDS"/>
    <property type="molecule type" value="Genomic_DNA"/>
</dbReference>
<dbReference type="RefSeq" id="XP_015611622.1">
    <property type="nucleotide sequence ID" value="XM_015756136.1"/>
</dbReference>
<dbReference type="SMR" id="Q67UU0"/>
<dbReference type="FunCoup" id="Q67UU0">
    <property type="interactions" value="819"/>
</dbReference>
<dbReference type="STRING" id="39947.Q67UU0"/>
<dbReference type="PaxDb" id="39947-Q67UU0"/>
<dbReference type="EnsemblPlants" id="Os09t0442600-01">
    <property type="protein sequence ID" value="Os09t0442600-01"/>
    <property type="gene ID" value="Os09g0442600"/>
</dbReference>
<dbReference type="Gramene" id="Os09t0442600-01">
    <property type="protein sequence ID" value="Os09t0442600-01"/>
    <property type="gene ID" value="Os09g0442600"/>
</dbReference>
<dbReference type="KEGG" id="dosa:Os09g0442600"/>
<dbReference type="eggNOG" id="KOG1157">
    <property type="taxonomic scope" value="Eukaryota"/>
</dbReference>
<dbReference type="HOGENOM" id="CLU_012300_7_1_1"/>
<dbReference type="InParanoid" id="Q67UU0"/>
<dbReference type="OrthoDB" id="430679at2759"/>
<dbReference type="Proteomes" id="UP000000763">
    <property type="component" value="Chromosome 9"/>
</dbReference>
<dbReference type="Proteomes" id="UP000059680">
    <property type="component" value="Chromosome 9"/>
</dbReference>
<dbReference type="GO" id="GO:0009507">
    <property type="term" value="C:chloroplast"/>
    <property type="evidence" value="ECO:0000318"/>
    <property type="project" value="GO_Central"/>
</dbReference>
<dbReference type="GO" id="GO:0005524">
    <property type="term" value="F:ATP binding"/>
    <property type="evidence" value="ECO:0007669"/>
    <property type="project" value="UniProtKB-KW"/>
</dbReference>
<dbReference type="GO" id="GO:0005525">
    <property type="term" value="F:GTP binding"/>
    <property type="evidence" value="ECO:0007669"/>
    <property type="project" value="UniProtKB-KW"/>
</dbReference>
<dbReference type="GO" id="GO:0008728">
    <property type="term" value="F:GTP diphosphokinase activity"/>
    <property type="evidence" value="ECO:0007669"/>
    <property type="project" value="UniProtKB-EC"/>
</dbReference>
<dbReference type="GO" id="GO:0016301">
    <property type="term" value="F:kinase activity"/>
    <property type="evidence" value="ECO:0007669"/>
    <property type="project" value="UniProtKB-KW"/>
</dbReference>
<dbReference type="GO" id="GO:0015969">
    <property type="term" value="P:guanosine tetraphosphate metabolic process"/>
    <property type="evidence" value="ECO:0007669"/>
    <property type="project" value="InterPro"/>
</dbReference>
<dbReference type="CDD" id="cd00077">
    <property type="entry name" value="HDc"/>
    <property type="match status" value="1"/>
</dbReference>
<dbReference type="CDD" id="cd05399">
    <property type="entry name" value="NT_Rel-Spo_like"/>
    <property type="match status" value="1"/>
</dbReference>
<dbReference type="FunFam" id="1.10.3210.10:FF:000001">
    <property type="entry name" value="GTP pyrophosphokinase RelA"/>
    <property type="match status" value="1"/>
</dbReference>
<dbReference type="FunFam" id="3.30.460.10:FF:000001">
    <property type="entry name" value="GTP pyrophosphokinase RelA"/>
    <property type="match status" value="1"/>
</dbReference>
<dbReference type="Gene3D" id="3.30.460.10">
    <property type="entry name" value="Beta Polymerase, domain 2"/>
    <property type="match status" value="1"/>
</dbReference>
<dbReference type="Gene3D" id="1.10.3210.10">
    <property type="entry name" value="Hypothetical protein af1432"/>
    <property type="match status" value="1"/>
</dbReference>
<dbReference type="InterPro" id="IPR003607">
    <property type="entry name" value="HD/PDEase_dom"/>
</dbReference>
<dbReference type="InterPro" id="IPR006674">
    <property type="entry name" value="HD_domain"/>
</dbReference>
<dbReference type="InterPro" id="IPR043519">
    <property type="entry name" value="NT_sf"/>
</dbReference>
<dbReference type="InterPro" id="IPR007685">
    <property type="entry name" value="RelA_SpoT"/>
</dbReference>
<dbReference type="PANTHER" id="PTHR21262:SF0">
    <property type="entry name" value="GTP DIPHOSPHOKINASE RSH3, CHLOROPLASTIC-RELATED"/>
    <property type="match status" value="1"/>
</dbReference>
<dbReference type="PANTHER" id="PTHR21262">
    <property type="entry name" value="GUANOSINE-3',5'-BIS DIPHOSPHATE 3'-PYROPHOSPHOHYDROLASE"/>
    <property type="match status" value="1"/>
</dbReference>
<dbReference type="Pfam" id="PF13328">
    <property type="entry name" value="HD_4"/>
    <property type="match status" value="1"/>
</dbReference>
<dbReference type="Pfam" id="PF04607">
    <property type="entry name" value="RelA_SpoT"/>
    <property type="match status" value="1"/>
</dbReference>
<dbReference type="SMART" id="SM00471">
    <property type="entry name" value="HDc"/>
    <property type="match status" value="1"/>
</dbReference>
<dbReference type="SMART" id="SM00954">
    <property type="entry name" value="RelA_SpoT"/>
    <property type="match status" value="1"/>
</dbReference>
<dbReference type="SUPFAM" id="SSF109604">
    <property type="entry name" value="HD-domain/PDEase-like"/>
    <property type="match status" value="1"/>
</dbReference>
<dbReference type="SUPFAM" id="SSF81301">
    <property type="entry name" value="Nucleotidyltransferase"/>
    <property type="match status" value="1"/>
</dbReference>
<dbReference type="PROSITE" id="PS51831">
    <property type="entry name" value="HD"/>
    <property type="match status" value="1"/>
</dbReference>
<proteinExistence type="evidence at transcript level"/>
<evidence type="ECO:0000250" key="1"/>
<evidence type="ECO:0000255" key="2"/>
<evidence type="ECO:0000255" key="3">
    <source>
        <dbReference type="PROSITE-ProRule" id="PRU01175"/>
    </source>
</evidence>
<evidence type="ECO:0000256" key="4">
    <source>
        <dbReference type="SAM" id="MobiDB-lite"/>
    </source>
</evidence>
<evidence type="ECO:0000269" key="5">
    <source>
    </source>
</evidence>
<evidence type="ECO:0000305" key="6"/>
<reference key="1">
    <citation type="submission" date="2002-10" db="EMBL/GenBank/DDBJ databases">
        <title>Oryza sativa (japonica cultivar group) mRNA for plastid (p)ppGpp synthase RSH3.</title>
        <authorList>
            <person name="Tozawa Y."/>
        </authorList>
    </citation>
    <scope>NUCLEOTIDE SEQUENCE [MRNA]</scope>
    <source>
        <strain>cv. Nipponbare</strain>
    </source>
</reference>
<reference key="2">
    <citation type="journal article" date="2005" name="Nature">
        <title>The map-based sequence of the rice genome.</title>
        <authorList>
            <consortium name="International rice genome sequencing project (IRGSP)"/>
        </authorList>
    </citation>
    <scope>NUCLEOTIDE SEQUENCE [LARGE SCALE GENOMIC DNA]</scope>
    <source>
        <strain>cv. Nipponbare</strain>
    </source>
</reference>
<reference key="3">
    <citation type="journal article" date="2008" name="Nucleic Acids Res.">
        <title>The rice annotation project database (RAP-DB): 2008 update.</title>
        <authorList>
            <consortium name="The rice annotation project (RAP)"/>
        </authorList>
    </citation>
    <scope>GENOME REANNOTATION</scope>
    <source>
        <strain>cv. Nipponbare</strain>
    </source>
</reference>
<reference key="4">
    <citation type="journal article" date="2013" name="Rice">
        <title>Improvement of the Oryza sativa Nipponbare reference genome using next generation sequence and optical map data.</title>
        <authorList>
            <person name="Kawahara Y."/>
            <person name="de la Bastide M."/>
            <person name="Hamilton J.P."/>
            <person name="Kanamori H."/>
            <person name="McCombie W.R."/>
            <person name="Ouyang S."/>
            <person name="Schwartz D.C."/>
            <person name="Tanaka T."/>
            <person name="Wu J."/>
            <person name="Zhou S."/>
            <person name="Childs K.L."/>
            <person name="Davidson R.M."/>
            <person name="Lin H."/>
            <person name="Quesada-Ocampo L."/>
            <person name="Vaillancourt B."/>
            <person name="Sakai H."/>
            <person name="Lee S.S."/>
            <person name="Kim J."/>
            <person name="Numa H."/>
            <person name="Itoh T."/>
            <person name="Buell C.R."/>
            <person name="Matsumoto T."/>
        </authorList>
    </citation>
    <scope>GENOME REANNOTATION</scope>
    <source>
        <strain>cv. Nipponbare</strain>
    </source>
</reference>
<reference key="5">
    <citation type="journal article" date="2004" name="J. Biol. Chem.">
        <title>Inducible expression, enzymatic activity, and origin of higher plant homologues of bacterial RelA/SpoT stress proteins in Nicotiana tabacum.</title>
        <authorList>
            <person name="Givens R.M."/>
            <person name="Lin M.H."/>
            <person name="Taylor D.J."/>
            <person name="Mechold U."/>
            <person name="Berry J.O."/>
            <person name="Hernandez V.J."/>
        </authorList>
    </citation>
    <scope>INDUCTION</scope>
</reference>
<accession>Q67UU0</accession>
<accession>Q0J1G0</accession>
<accession>Q7XAP3</accession>
<feature type="transit peptide" description="Chloroplast" evidence="2">
    <location>
        <begin position="1"/>
        <end position="58"/>
    </location>
</feature>
<feature type="chain" id="PRO_0000429852" description="Probable GTP diphosphokinase RSH3, chloroplastic">
    <location>
        <begin position="59"/>
        <end position="708"/>
    </location>
</feature>
<feature type="domain" description="HD" evidence="3">
    <location>
        <begin position="233"/>
        <end position="337"/>
    </location>
</feature>
<feature type="region of interest" description="Disordered" evidence="4">
    <location>
        <begin position="1"/>
        <end position="50"/>
    </location>
</feature>
<feature type="region of interest" description="Disordered" evidence="4">
    <location>
        <begin position="109"/>
        <end position="134"/>
    </location>
</feature>
<feature type="compositionally biased region" description="Low complexity" evidence="4">
    <location>
        <begin position="29"/>
        <end position="41"/>
    </location>
</feature>
<feature type="compositionally biased region" description="Low complexity" evidence="4">
    <location>
        <begin position="118"/>
        <end position="131"/>
    </location>
</feature>
<protein>
    <recommendedName>
        <fullName>Probable GTP diphosphokinase RSH3, chloroplastic</fullName>
        <ecNumber>2.7.6.5</ecNumber>
    </recommendedName>
    <alternativeName>
        <fullName>RelA/SpoT homolog 3</fullName>
        <shortName>OsRSH3</shortName>
    </alternativeName>
    <alternativeName>
        <fullName>ppGpp synthetase RSH3</fullName>
    </alternativeName>
</protein>
<gene>
    <name type="primary">RSH3</name>
    <name type="ordered locus">Os09g0442600</name>
    <name type="ordered locus">LOC_Os09g27050</name>
    <name type="ORF">P0046G12.25</name>
</gene>